<proteinExistence type="evidence at protein level"/>
<dbReference type="EMBL" id="X72757">
    <property type="protein sequence ID" value="CAA51286.1"/>
    <property type="status" value="ALT_SEQ"/>
    <property type="molecule type" value="Genomic_DNA"/>
</dbReference>
<dbReference type="EMBL" id="X12553">
    <property type="protein sequence ID" value="CAA31067.1"/>
    <property type="molecule type" value="mRNA"/>
</dbReference>
<dbReference type="PIR" id="S01156">
    <property type="entry name" value="S01156"/>
</dbReference>
<dbReference type="PIR" id="S65379">
    <property type="entry name" value="S65379"/>
</dbReference>
<dbReference type="RefSeq" id="NP_036946.1">
    <property type="nucleotide sequence ID" value="NM_012814.1"/>
</dbReference>
<dbReference type="SMR" id="P10818"/>
<dbReference type="CORUM" id="P10818"/>
<dbReference type="FunCoup" id="P10818">
    <property type="interactions" value="2350"/>
</dbReference>
<dbReference type="STRING" id="10116.ENSRNOP00000001545"/>
<dbReference type="PhosphoSitePlus" id="P10818"/>
<dbReference type="jPOST" id="P10818"/>
<dbReference type="PaxDb" id="10116-ENSRNOP00000001545"/>
<dbReference type="DNASU" id="25282"/>
<dbReference type="GeneID" id="25282"/>
<dbReference type="KEGG" id="rno:25282"/>
<dbReference type="UCSC" id="RGD:2384">
    <property type="organism name" value="rat"/>
</dbReference>
<dbReference type="AGR" id="RGD:2384"/>
<dbReference type="CTD" id="1337"/>
<dbReference type="RGD" id="2384">
    <property type="gene designation" value="Cox6a1"/>
</dbReference>
<dbReference type="VEuPathDB" id="HostDB:ENSRNOG00000001170"/>
<dbReference type="eggNOG" id="KOG3469">
    <property type="taxonomic scope" value="Eukaryota"/>
</dbReference>
<dbReference type="HOGENOM" id="CLU_122515_1_1_1"/>
<dbReference type="InParanoid" id="P10818"/>
<dbReference type="OMA" id="MWKTLTY"/>
<dbReference type="OrthoDB" id="56843at9989"/>
<dbReference type="PhylomeDB" id="P10818"/>
<dbReference type="TreeFam" id="TF105064"/>
<dbReference type="Reactome" id="R-RNO-5628897">
    <property type="pathway name" value="TP53 Regulates Metabolic Genes"/>
</dbReference>
<dbReference type="Reactome" id="R-RNO-611105">
    <property type="pathway name" value="Respiratory electron transport"/>
</dbReference>
<dbReference type="Reactome" id="R-RNO-9707564">
    <property type="pathway name" value="Cytoprotection by HMOX1"/>
</dbReference>
<dbReference type="UniPathway" id="UPA00705"/>
<dbReference type="PRO" id="PR:P10818"/>
<dbReference type="Proteomes" id="UP000002494">
    <property type="component" value="Chromosome 12"/>
</dbReference>
<dbReference type="Bgee" id="ENSRNOG00000001170">
    <property type="expression patterns" value="Expressed in cerebellum and 20 other cell types or tissues"/>
</dbReference>
<dbReference type="GO" id="GO:0005743">
    <property type="term" value="C:mitochondrial inner membrane"/>
    <property type="evidence" value="ECO:0007669"/>
    <property type="project" value="UniProtKB-SubCell"/>
</dbReference>
<dbReference type="GO" id="GO:0031966">
    <property type="term" value="C:mitochondrial membrane"/>
    <property type="evidence" value="ECO:0000266"/>
    <property type="project" value="RGD"/>
</dbReference>
<dbReference type="GO" id="GO:0045277">
    <property type="term" value="C:respiratory chain complex IV"/>
    <property type="evidence" value="ECO:0000318"/>
    <property type="project" value="GO_Central"/>
</dbReference>
<dbReference type="GO" id="GO:0030234">
    <property type="term" value="F:enzyme regulator activity"/>
    <property type="evidence" value="ECO:0000318"/>
    <property type="project" value="GO_Central"/>
</dbReference>
<dbReference type="GO" id="GO:0016491">
    <property type="term" value="F:oxidoreductase activity"/>
    <property type="evidence" value="ECO:0007669"/>
    <property type="project" value="UniProtKB-KW"/>
</dbReference>
<dbReference type="GO" id="GO:0006123">
    <property type="term" value="P:mitochondrial electron transport, cytochrome c to oxygen"/>
    <property type="evidence" value="ECO:0000318"/>
    <property type="project" value="GO_Central"/>
</dbReference>
<dbReference type="CDD" id="cd00925">
    <property type="entry name" value="Cyt_c_Oxidase_VIa"/>
    <property type="match status" value="1"/>
</dbReference>
<dbReference type="FunFam" id="4.10.95.10:FF:000001">
    <property type="entry name" value="Cytochrome c oxidase subunit 6A, mitochondrial"/>
    <property type="match status" value="1"/>
</dbReference>
<dbReference type="Gene3D" id="4.10.95.10">
    <property type="entry name" value="Cytochrome c oxidase, subunit VIa"/>
    <property type="match status" value="1"/>
</dbReference>
<dbReference type="InterPro" id="IPR001349">
    <property type="entry name" value="Cyt_c_oxidase_su6a"/>
</dbReference>
<dbReference type="InterPro" id="IPR018507">
    <property type="entry name" value="Cyt_c_oxidase_su6a_CS"/>
</dbReference>
<dbReference type="InterPro" id="IPR036418">
    <property type="entry name" value="Cyt_c_oxidase_su6a_sf"/>
</dbReference>
<dbReference type="PANTHER" id="PTHR11504">
    <property type="entry name" value="CYTOCHROME C OXIDASE POLYPEPTIDE VIA"/>
    <property type="match status" value="1"/>
</dbReference>
<dbReference type="PANTHER" id="PTHR11504:SF4">
    <property type="entry name" value="CYTOCHROME C OXIDASE SUBUNIT 6A1, MITOCHONDRIAL"/>
    <property type="match status" value="1"/>
</dbReference>
<dbReference type="Pfam" id="PF02046">
    <property type="entry name" value="COX6A"/>
    <property type="match status" value="1"/>
</dbReference>
<dbReference type="PIRSF" id="PIRSF000277">
    <property type="entry name" value="COX6A1"/>
    <property type="match status" value="1"/>
</dbReference>
<dbReference type="SUPFAM" id="SSF81411">
    <property type="entry name" value="Mitochondrial cytochrome c oxidase subunit VIa"/>
    <property type="match status" value="1"/>
</dbReference>
<dbReference type="PROSITE" id="PS01329">
    <property type="entry name" value="COX6A"/>
    <property type="match status" value="1"/>
</dbReference>
<evidence type="ECO:0000250" key="1">
    <source>
        <dbReference type="UniProtKB" id="P07471"/>
    </source>
</evidence>
<evidence type="ECO:0000250" key="2">
    <source>
        <dbReference type="UniProtKB" id="P12074"/>
    </source>
</evidence>
<evidence type="ECO:0000250" key="3">
    <source>
        <dbReference type="UniProtKB" id="P32799"/>
    </source>
</evidence>
<evidence type="ECO:0000269" key="4">
    <source>
    </source>
</evidence>
<evidence type="ECO:0000269" key="5">
    <source>
    </source>
</evidence>
<evidence type="ECO:0000305" key="6"/>
<protein>
    <recommendedName>
        <fullName>Cytochrome c oxidase subunit 6A1, mitochondrial</fullName>
    </recommendedName>
    <alternativeName>
        <fullName>Cytochrome c oxidase polypeptide VIa-liver</fullName>
    </alternativeName>
</protein>
<name>CX6A1_RAT</name>
<sequence>MASAVLSASRVSGLLGRALPRVGRPMSSGAHGEEGSARIWKALTYFVALPGVGVSMLNVFLKSRHEEHERPEFVAYPHLRIRTKPFPWGDGNHTLFHNPHMNPLPTGYEDE</sequence>
<accession>P10818</accession>
<organism>
    <name type="scientific">Rattus norvegicus</name>
    <name type="common">Rat</name>
    <dbReference type="NCBI Taxonomy" id="10116"/>
    <lineage>
        <taxon>Eukaryota</taxon>
        <taxon>Metazoa</taxon>
        <taxon>Chordata</taxon>
        <taxon>Craniata</taxon>
        <taxon>Vertebrata</taxon>
        <taxon>Euteleostomi</taxon>
        <taxon>Mammalia</taxon>
        <taxon>Eutheria</taxon>
        <taxon>Euarchontoglires</taxon>
        <taxon>Glires</taxon>
        <taxon>Rodentia</taxon>
        <taxon>Myomorpha</taxon>
        <taxon>Muroidea</taxon>
        <taxon>Muridae</taxon>
        <taxon>Murinae</taxon>
        <taxon>Rattus</taxon>
    </lineage>
</organism>
<keyword id="KW-0903">Direct protein sequencing</keyword>
<keyword id="KW-0472">Membrane</keyword>
<keyword id="KW-0496">Mitochondrion</keyword>
<keyword id="KW-0999">Mitochondrion inner membrane</keyword>
<keyword id="KW-0560">Oxidoreductase</keyword>
<keyword id="KW-1185">Reference proteome</keyword>
<keyword id="KW-0809">Transit peptide</keyword>
<keyword id="KW-0812">Transmembrane</keyword>
<keyword id="KW-1133">Transmembrane helix</keyword>
<feature type="transit peptide" description="Mitochondrion" evidence="4 5">
    <location>
        <begin position="1"/>
        <end position="26"/>
    </location>
</feature>
<feature type="chain" id="PRO_0000006122" description="Cytochrome c oxidase subunit 6A1, mitochondrial">
    <location>
        <begin position="27"/>
        <end position="111"/>
    </location>
</feature>
<feature type="topological domain" description="Mitochondrial matrix" evidence="1">
    <location>
        <begin position="27"/>
        <end position="36"/>
    </location>
</feature>
<feature type="transmembrane region" description="Helical" evidence="1">
    <location>
        <begin position="37"/>
        <end position="61"/>
    </location>
</feature>
<feature type="topological domain" description="Mitochondrial intermembrane" evidence="1">
    <location>
        <begin position="62"/>
        <end position="111"/>
    </location>
</feature>
<reference key="1">
    <citation type="journal article" date="1994" name="Gene">
        <title>Structural organisation of the rat genes encoding liver- and heart-type of cytochrome c oxidase subunit VIa and a pseudogene related to the COXVIa-L cDNA.</title>
        <authorList>
            <person name="Mell O.C."/>
            <person name="Seibel P."/>
            <person name="Kadenbach B."/>
        </authorList>
    </citation>
    <scope>NUCLEOTIDE SEQUENCE [GENOMIC DNA]</scope>
    <source>
        <strain>Fischer</strain>
        <tissue>Liver</tissue>
    </source>
</reference>
<reference key="2">
    <citation type="journal article" date="1988" name="EMBO J.">
        <title>Characterization of two different genes (cDNA) for cytochrome c oxidase subunit VIa from heart and liver of the rat.</title>
        <authorList>
            <person name="Schlerf A."/>
            <person name="Droste M."/>
            <person name="Winter M."/>
            <person name="Kadenbach B."/>
        </authorList>
    </citation>
    <scope>NUCLEOTIDE SEQUENCE OF 27-111</scope>
    <source>
        <tissue>Liver</tissue>
    </source>
</reference>
<reference key="3">
    <citation type="journal article" date="1990" name="Biochim. Biophys. Acta">
        <title>Tissue- and species-specific expression of cytochrome c oxidase isozymes in vertebrates.</title>
        <authorList>
            <person name="Kadenbach B."/>
            <person name="Stroh A."/>
            <person name="Becker A."/>
            <person name="Eckersorn C."/>
            <person name="Lottspeich F."/>
        </authorList>
    </citation>
    <scope>PROTEIN SEQUENCE OF 27-48</scope>
    <source>
        <tissue>Brown adipose tissue</tissue>
        <tissue>Liver</tissue>
    </source>
</reference>
<reference key="4">
    <citation type="journal article" date="1995" name="Eur. J. Biochem.">
        <title>Cytochrome-c oxidase in developing rat heart. Enzymic properties and amino-terminal sequences suggest identity of the fetal heart and the adult liver isoform.</title>
        <authorList>
            <person name="Schaegger H."/>
            <person name="Noack H."/>
            <person name="Halangk W."/>
            <person name="Brandt U."/>
            <person name="von Jagow G."/>
        </authorList>
    </citation>
    <scope>PROTEIN SEQUENCE OF 27-49</scope>
    <source>
        <strain>Wistar</strain>
        <tissue>Liver</tissue>
    </source>
</reference>
<reference key="5">
    <citation type="submission" date="2007-04" db="UniProtKB">
        <authorList>
            <person name="Lubec G."/>
            <person name="Diao W."/>
        </authorList>
    </citation>
    <scope>PROTEIN SEQUENCE OF 65-80</scope>
    <scope>IDENTIFICATION BY MASS SPECTROMETRY</scope>
    <source>
        <strain>Sprague-Dawley</strain>
        <tissue>Hippocampus</tissue>
    </source>
</reference>
<comment type="function">
    <text evidence="3">Component of the cytochrome c oxidase, the last enzyme in the mitochondrial electron transport chain which drives oxidative phosphorylation. The respiratory chain contains 3 multisubunit complexes succinate dehydrogenase (complex II, CII), ubiquinol-cytochrome c oxidoreductase (cytochrome b-c1 complex, complex III, CIII) and cytochrome c oxidase (complex IV, CIV), that cooperate to transfer electrons derived from NADH and succinate to molecular oxygen, creating an electrochemical gradient over the inner membrane that drives transmembrane transport and the ATP synthase. Cytochrome c oxidase is the component of the respiratory chain that catalyzes the reduction of oxygen to water. Electrons originating from reduced cytochrome c in the intermembrane space (IMS) are transferred via the dinuclear copper A center (CU(A)) of subunit 2 and heme A of subunit 1 to the active site in subunit 1, a binuclear center (BNC) formed by heme A3 and copper B (CU(B)). The BNC reduces molecular oxygen to 2 water molecules unsing 4 electrons from cytochrome c in the IMS and 4 protons from the mitochondrial matrix.</text>
</comment>
<comment type="pathway">
    <text evidence="3">Energy metabolism; oxidative phosphorylation.</text>
</comment>
<comment type="subunit">
    <text evidence="2">Component of the cytochrome c oxidase (complex IV, CIV), a multisubunit enzyme composed of 14 subunits. The complex is composed of a catalytic core of 3 subunits MT-CO1, MT-CO2 and MT-CO3, encoded in the mitochondrial DNA, and 11 supernumerary subunits COX4I, COX5A, COX5B, COX6A, COX6B, COX6C, COX7A, COX7B, COX7C, COX8 and NDUFA4, which are encoded in the nuclear genome. The complex exists as a monomer or a dimer and forms supercomplexes (SCs) in the inner mitochondrial membrane with NADH-ubiquinone oxidoreductase (complex I, CI) and ubiquinol-cytochrome c oxidoreductase (cytochrome b-c1 complex, complex III, CIII), resulting in different assemblies (supercomplex SCI(1)III(2)IV(1) and megacomplex MCI(2)III(2)IV(2)).</text>
</comment>
<comment type="subcellular location">
    <subcellularLocation>
        <location evidence="2">Mitochondrion inner membrane</location>
        <topology evidence="2">Single-pass membrane protein</topology>
    </subcellularLocation>
</comment>
<comment type="similarity">
    <text evidence="6">Belongs to the cytochrome c oxidase subunit 6A family.</text>
</comment>
<gene>
    <name type="primary">Cox6a1</name>
    <name type="synonym">Cox6al</name>
</gene>